<accession>Q6KZK4</accession>
<dbReference type="EC" id="3.1.26.4" evidence="1"/>
<dbReference type="EMBL" id="AE017261">
    <property type="protein sequence ID" value="AAT43848.1"/>
    <property type="molecule type" value="Genomic_DNA"/>
</dbReference>
<dbReference type="RefSeq" id="WP_011178064.1">
    <property type="nucleotide sequence ID" value="NC_005877.1"/>
</dbReference>
<dbReference type="SMR" id="Q6KZK4"/>
<dbReference type="FunCoup" id="Q6KZK4">
    <property type="interactions" value="105"/>
</dbReference>
<dbReference type="STRING" id="263820.PTO1263"/>
<dbReference type="PaxDb" id="263820-PTO1263"/>
<dbReference type="GeneID" id="2844626"/>
<dbReference type="KEGG" id="pto:PTO1263"/>
<dbReference type="PATRIC" id="fig|263820.9.peg.1311"/>
<dbReference type="eggNOG" id="arCOG04121">
    <property type="taxonomic scope" value="Archaea"/>
</dbReference>
<dbReference type="HOGENOM" id="CLU_036532_0_4_2"/>
<dbReference type="InParanoid" id="Q6KZK4"/>
<dbReference type="OrthoDB" id="33866at2157"/>
<dbReference type="Proteomes" id="UP000000438">
    <property type="component" value="Chromosome"/>
</dbReference>
<dbReference type="GO" id="GO:0005737">
    <property type="term" value="C:cytoplasm"/>
    <property type="evidence" value="ECO:0007669"/>
    <property type="project" value="UniProtKB-SubCell"/>
</dbReference>
<dbReference type="GO" id="GO:0032299">
    <property type="term" value="C:ribonuclease H2 complex"/>
    <property type="evidence" value="ECO:0007669"/>
    <property type="project" value="TreeGrafter"/>
</dbReference>
<dbReference type="GO" id="GO:0030145">
    <property type="term" value="F:manganese ion binding"/>
    <property type="evidence" value="ECO:0007669"/>
    <property type="project" value="UniProtKB-UniRule"/>
</dbReference>
<dbReference type="GO" id="GO:0003723">
    <property type="term" value="F:RNA binding"/>
    <property type="evidence" value="ECO:0007669"/>
    <property type="project" value="InterPro"/>
</dbReference>
<dbReference type="GO" id="GO:0004523">
    <property type="term" value="F:RNA-DNA hybrid ribonuclease activity"/>
    <property type="evidence" value="ECO:0007669"/>
    <property type="project" value="UniProtKB-UniRule"/>
</dbReference>
<dbReference type="GO" id="GO:0043137">
    <property type="term" value="P:DNA replication, removal of RNA primer"/>
    <property type="evidence" value="ECO:0007669"/>
    <property type="project" value="TreeGrafter"/>
</dbReference>
<dbReference type="GO" id="GO:0006298">
    <property type="term" value="P:mismatch repair"/>
    <property type="evidence" value="ECO:0007669"/>
    <property type="project" value="TreeGrafter"/>
</dbReference>
<dbReference type="CDD" id="cd07180">
    <property type="entry name" value="RNase_HII_archaea_like"/>
    <property type="match status" value="1"/>
</dbReference>
<dbReference type="Gene3D" id="3.30.420.10">
    <property type="entry name" value="Ribonuclease H-like superfamily/Ribonuclease H"/>
    <property type="match status" value="1"/>
</dbReference>
<dbReference type="Gene3D" id="1.10.10.460">
    <property type="entry name" value="Ribonuclease hii. Domain 2"/>
    <property type="match status" value="1"/>
</dbReference>
<dbReference type="HAMAP" id="MF_00052_A">
    <property type="entry name" value="RNase_HII_A"/>
    <property type="match status" value="1"/>
</dbReference>
<dbReference type="InterPro" id="IPR004649">
    <property type="entry name" value="RNase_H2_suA"/>
</dbReference>
<dbReference type="InterPro" id="IPR001352">
    <property type="entry name" value="RNase_HII/HIII"/>
</dbReference>
<dbReference type="InterPro" id="IPR024567">
    <property type="entry name" value="RNase_HII/HIII_dom"/>
</dbReference>
<dbReference type="InterPro" id="IPR020787">
    <property type="entry name" value="RNase_HII_arc"/>
</dbReference>
<dbReference type="InterPro" id="IPR023160">
    <property type="entry name" value="RNase_HII_hlx-loop-hlx_cap_dom"/>
</dbReference>
<dbReference type="InterPro" id="IPR012337">
    <property type="entry name" value="RNaseH-like_sf"/>
</dbReference>
<dbReference type="InterPro" id="IPR036397">
    <property type="entry name" value="RNaseH_sf"/>
</dbReference>
<dbReference type="NCBIfam" id="TIGR00729">
    <property type="entry name" value="ribonuclease HII"/>
    <property type="match status" value="1"/>
</dbReference>
<dbReference type="PANTHER" id="PTHR10954:SF23">
    <property type="entry name" value="RIBONUCLEASE"/>
    <property type="match status" value="1"/>
</dbReference>
<dbReference type="PANTHER" id="PTHR10954">
    <property type="entry name" value="RIBONUCLEASE H2 SUBUNIT A"/>
    <property type="match status" value="1"/>
</dbReference>
<dbReference type="Pfam" id="PF01351">
    <property type="entry name" value="RNase_HII"/>
    <property type="match status" value="1"/>
</dbReference>
<dbReference type="SUPFAM" id="SSF53098">
    <property type="entry name" value="Ribonuclease H-like"/>
    <property type="match status" value="1"/>
</dbReference>
<dbReference type="PROSITE" id="PS51975">
    <property type="entry name" value="RNASE_H_2"/>
    <property type="match status" value="1"/>
</dbReference>
<protein>
    <recommendedName>
        <fullName evidence="1">Ribonuclease HII</fullName>
        <shortName evidence="1">RNase HII</shortName>
        <ecNumber evidence="1">3.1.26.4</ecNumber>
    </recommendedName>
</protein>
<proteinExistence type="inferred from homology"/>
<keyword id="KW-0963">Cytoplasm</keyword>
<keyword id="KW-0255">Endonuclease</keyword>
<keyword id="KW-0378">Hydrolase</keyword>
<keyword id="KW-0464">Manganese</keyword>
<keyword id="KW-0479">Metal-binding</keyword>
<keyword id="KW-0540">Nuclease</keyword>
<name>RNH2_PICTO</name>
<comment type="function">
    <text evidence="1">Endonuclease that specifically degrades the RNA of RNA-DNA hybrids.</text>
</comment>
<comment type="catalytic activity">
    <reaction evidence="1">
        <text>Endonucleolytic cleavage to 5'-phosphomonoester.</text>
        <dbReference type="EC" id="3.1.26.4"/>
    </reaction>
</comment>
<comment type="cofactor">
    <cofactor evidence="1">
        <name>Mn(2+)</name>
        <dbReference type="ChEBI" id="CHEBI:29035"/>
    </cofactor>
    <cofactor evidence="1">
        <name>Mg(2+)</name>
        <dbReference type="ChEBI" id="CHEBI:18420"/>
    </cofactor>
    <text evidence="1">Manganese or magnesium. Binds 1 divalent metal ion per monomer in the absence of substrate. May bind a second metal ion after substrate binding.</text>
</comment>
<comment type="subcellular location">
    <subcellularLocation>
        <location evidence="1">Cytoplasm</location>
    </subcellularLocation>
</comment>
<comment type="similarity">
    <text evidence="1">Belongs to the RNase HII family.</text>
</comment>
<sequence>MCVCGIDEAGRGPVIGPMVMAMVCADDINFYVNDSKLLTRNKRSLIFNDVSGLYHKYYIINPAEIDDAVKKHSLNNLEEQYAEKLILKAECEKIYIDCFDVNESRLERILKDRTGKEVICRHHADRDIKIVSAASIIAKVLRDNEIEKLKSIYGDFGSGYPSDPKTLRFLEHSIINHDNIDNIVRKEWKTYKNLVQGHI</sequence>
<evidence type="ECO:0000255" key="1">
    <source>
        <dbReference type="HAMAP-Rule" id="MF_00052"/>
    </source>
</evidence>
<evidence type="ECO:0000255" key="2">
    <source>
        <dbReference type="PROSITE-ProRule" id="PRU01319"/>
    </source>
</evidence>
<reference key="1">
    <citation type="journal article" date="2004" name="Proc. Natl. Acad. Sci. U.S.A.">
        <title>Genome sequence of Picrophilus torridus and its implications for life around pH 0.</title>
        <authorList>
            <person name="Fuetterer O."/>
            <person name="Angelov A."/>
            <person name="Liesegang H."/>
            <person name="Gottschalk G."/>
            <person name="Schleper C."/>
            <person name="Schepers B."/>
            <person name="Dock C."/>
            <person name="Antranikian G."/>
            <person name="Liebl W."/>
        </authorList>
    </citation>
    <scope>NUCLEOTIDE SEQUENCE [LARGE SCALE GENOMIC DNA]</scope>
    <source>
        <strain>ATCC 700027 / DSM 9790 / JCM 10055 / NBRC 100828 / KAW 2/3</strain>
    </source>
</reference>
<gene>
    <name evidence="1" type="primary">rnhB</name>
    <name type="ordered locus">PTO1263</name>
</gene>
<organism>
    <name type="scientific">Picrophilus torridus (strain ATCC 700027 / DSM 9790 / JCM 10055 / NBRC 100828 / KAW 2/3)</name>
    <dbReference type="NCBI Taxonomy" id="1122961"/>
    <lineage>
        <taxon>Archaea</taxon>
        <taxon>Methanobacteriati</taxon>
        <taxon>Thermoplasmatota</taxon>
        <taxon>Thermoplasmata</taxon>
        <taxon>Thermoplasmatales</taxon>
        <taxon>Picrophilaceae</taxon>
        <taxon>Picrophilus</taxon>
    </lineage>
</organism>
<feature type="chain" id="PRO_0000111667" description="Ribonuclease HII">
    <location>
        <begin position="1"/>
        <end position="199"/>
    </location>
</feature>
<feature type="domain" description="RNase H type-2" evidence="2">
    <location>
        <begin position="1"/>
        <end position="199"/>
    </location>
</feature>
<feature type="binding site" evidence="1">
    <location>
        <position position="7"/>
    </location>
    <ligand>
        <name>a divalent metal cation</name>
        <dbReference type="ChEBI" id="CHEBI:60240"/>
    </ligand>
</feature>
<feature type="binding site" evidence="1">
    <location>
        <position position="8"/>
    </location>
    <ligand>
        <name>a divalent metal cation</name>
        <dbReference type="ChEBI" id="CHEBI:60240"/>
    </ligand>
</feature>
<feature type="binding site" evidence="1">
    <location>
        <position position="97"/>
    </location>
    <ligand>
        <name>a divalent metal cation</name>
        <dbReference type="ChEBI" id="CHEBI:60240"/>
    </ligand>
</feature>